<evidence type="ECO:0000255" key="1">
    <source>
        <dbReference type="HAMAP-Rule" id="MF_01855"/>
    </source>
</evidence>
<evidence type="ECO:0000305" key="2"/>
<keyword id="KW-0119">Carbohydrate metabolism</keyword>
<keyword id="KW-0963">Cytoplasm</keyword>
<keyword id="KW-0378">Hydrolase</keyword>
<keyword id="KW-0460">Magnesium</keyword>
<keyword id="KW-0479">Metal-binding</keyword>
<keyword id="KW-1185">Reference proteome</keyword>
<feature type="chain" id="PRO_0000364773" description="Fructose-1,6-bisphosphatase class 1">
    <location>
        <begin position="1"/>
        <end position="320"/>
    </location>
</feature>
<feature type="binding site" evidence="1">
    <location>
        <position position="105"/>
    </location>
    <ligand>
        <name>Mg(2+)</name>
        <dbReference type="ChEBI" id="CHEBI:18420"/>
        <label>1</label>
    </ligand>
</feature>
<feature type="binding site" evidence="1">
    <location>
        <position position="124"/>
    </location>
    <ligand>
        <name>Mg(2+)</name>
        <dbReference type="ChEBI" id="CHEBI:18420"/>
        <label>1</label>
    </ligand>
</feature>
<feature type="binding site" evidence="1">
    <location>
        <position position="124"/>
    </location>
    <ligand>
        <name>Mg(2+)</name>
        <dbReference type="ChEBI" id="CHEBI:18420"/>
        <label>2</label>
    </ligand>
</feature>
<feature type="binding site" evidence="1">
    <location>
        <position position="126"/>
    </location>
    <ligand>
        <name>Mg(2+)</name>
        <dbReference type="ChEBI" id="CHEBI:18420"/>
        <label>1</label>
    </ligand>
</feature>
<feature type="binding site" evidence="1">
    <location>
        <begin position="127"/>
        <end position="130"/>
    </location>
    <ligand>
        <name>substrate</name>
    </ligand>
</feature>
<feature type="binding site" evidence="1">
    <location>
        <position position="127"/>
    </location>
    <ligand>
        <name>Mg(2+)</name>
        <dbReference type="ChEBI" id="CHEBI:18420"/>
        <label>2</label>
    </ligand>
</feature>
<feature type="binding site" evidence="1">
    <location>
        <position position="233"/>
    </location>
    <ligand>
        <name>substrate</name>
    </ligand>
</feature>
<feature type="binding site" evidence="1">
    <location>
        <position position="263"/>
    </location>
    <ligand>
        <name>substrate</name>
    </ligand>
</feature>
<feature type="binding site" evidence="1">
    <location>
        <position position="269"/>
    </location>
    <ligand>
        <name>Mg(2+)</name>
        <dbReference type="ChEBI" id="CHEBI:18420"/>
        <label>2</label>
    </ligand>
</feature>
<accession>A2ST39</accession>
<comment type="catalytic activity">
    <reaction evidence="1">
        <text>beta-D-fructose 1,6-bisphosphate + H2O = beta-D-fructose 6-phosphate + phosphate</text>
        <dbReference type="Rhea" id="RHEA:11064"/>
        <dbReference type="ChEBI" id="CHEBI:15377"/>
        <dbReference type="ChEBI" id="CHEBI:32966"/>
        <dbReference type="ChEBI" id="CHEBI:43474"/>
        <dbReference type="ChEBI" id="CHEBI:57634"/>
        <dbReference type="EC" id="3.1.3.11"/>
    </reaction>
</comment>
<comment type="cofactor">
    <cofactor evidence="1">
        <name>Mg(2+)</name>
        <dbReference type="ChEBI" id="CHEBI:18420"/>
    </cofactor>
    <text evidence="1">Binds 2 magnesium ions per subunit.</text>
</comment>
<comment type="pathway">
    <text evidence="1">Carbohydrate biosynthesis; gluconeogenesis.</text>
</comment>
<comment type="subunit">
    <text evidence="1">Homotetramer.</text>
</comment>
<comment type="subcellular location">
    <subcellularLocation>
        <location evidence="1">Cytoplasm</location>
    </subcellularLocation>
</comment>
<comment type="similarity">
    <text evidence="1">Belongs to the FBPase class 1 family.</text>
</comment>
<comment type="sequence caution" evidence="2">
    <conflict type="erroneous initiation">
        <sequence resource="EMBL-CDS" id="ABN07495"/>
    </conflict>
</comment>
<protein>
    <recommendedName>
        <fullName evidence="1">Fructose-1,6-bisphosphatase class 1</fullName>
        <shortName evidence="1">FBPase class 1</shortName>
        <ecNumber evidence="1">3.1.3.11</ecNumber>
    </recommendedName>
    <alternativeName>
        <fullName evidence="1">D-fructose-1,6-bisphosphate 1-phosphohydrolase class 1</fullName>
    </alternativeName>
</protein>
<gene>
    <name evidence="1" type="primary">fbp</name>
    <name type="ordered locus">Mlab_1328</name>
</gene>
<sequence length="320" mass="34667">MRGSVFGFVPSFRIRFFASSTHIIDTMKTLQEYLSASHAPEDLGKIIMMIADQAGPIRSAFISNQNYAGSTNSSGEDQAEMDTWADTRITSVLQESGLVRSIASEEQEDITEMSPSAKYSVVMDPLDGSSLIKVNLTVGTIVGIYEGDVLQAGNKLRAAFYMLYGPLTTLTISLGNGVSIFAMNEEGTYVLLKENVRIPEGTLCGSGGLRPEWTEKHIQYMNAIECEGGKNRYSGSFVADFHQILEYGGVYAYPATKKSASGKLRLVFEINPIGFLAVQAGGAVSNGESSTLEIVPTKVHQRTPVYVGSKGMIAKIEAIR</sequence>
<name>F16PA_METLZ</name>
<proteinExistence type="inferred from homology"/>
<reference key="1">
    <citation type="journal article" date="2009" name="Stand. Genomic Sci.">
        <title>Complete genome sequence of Methanocorpusculum labreanum type strain Z.</title>
        <authorList>
            <person name="Anderson I.J."/>
            <person name="Sieprawska-Lupa M."/>
            <person name="Goltsman E."/>
            <person name="Lapidus A."/>
            <person name="Copeland A."/>
            <person name="Glavina Del Rio T."/>
            <person name="Tice H."/>
            <person name="Dalin E."/>
            <person name="Barry K."/>
            <person name="Pitluck S."/>
            <person name="Hauser L."/>
            <person name="Land M."/>
            <person name="Lucas S."/>
            <person name="Richardson P."/>
            <person name="Whitman W.B."/>
            <person name="Kyrpides N.C."/>
        </authorList>
    </citation>
    <scope>NUCLEOTIDE SEQUENCE [LARGE SCALE GENOMIC DNA]</scope>
    <source>
        <strain>ATCC 43576 / DSM 4855 / Z</strain>
    </source>
</reference>
<dbReference type="EC" id="3.1.3.11" evidence="1"/>
<dbReference type="EMBL" id="CP000559">
    <property type="protein sequence ID" value="ABN07495.1"/>
    <property type="status" value="ALT_INIT"/>
    <property type="molecule type" value="Genomic_DNA"/>
</dbReference>
<dbReference type="SMR" id="A2ST39"/>
<dbReference type="STRING" id="410358.Mlab_1328"/>
<dbReference type="KEGG" id="mla:Mlab_1328"/>
<dbReference type="eggNOG" id="arCOG04603">
    <property type="taxonomic scope" value="Archaea"/>
</dbReference>
<dbReference type="HOGENOM" id="CLU_039977_3_0_2"/>
<dbReference type="UniPathway" id="UPA00138"/>
<dbReference type="Proteomes" id="UP000000365">
    <property type="component" value="Chromosome"/>
</dbReference>
<dbReference type="GO" id="GO:0005737">
    <property type="term" value="C:cytoplasm"/>
    <property type="evidence" value="ECO:0007669"/>
    <property type="project" value="UniProtKB-SubCell"/>
</dbReference>
<dbReference type="GO" id="GO:0042132">
    <property type="term" value="F:fructose 1,6-bisphosphate 1-phosphatase activity"/>
    <property type="evidence" value="ECO:0007669"/>
    <property type="project" value="UniProtKB-UniRule"/>
</dbReference>
<dbReference type="GO" id="GO:0000287">
    <property type="term" value="F:magnesium ion binding"/>
    <property type="evidence" value="ECO:0007669"/>
    <property type="project" value="UniProtKB-UniRule"/>
</dbReference>
<dbReference type="GO" id="GO:0030388">
    <property type="term" value="P:fructose 1,6-bisphosphate metabolic process"/>
    <property type="evidence" value="ECO:0007669"/>
    <property type="project" value="TreeGrafter"/>
</dbReference>
<dbReference type="GO" id="GO:0006002">
    <property type="term" value="P:fructose 6-phosphate metabolic process"/>
    <property type="evidence" value="ECO:0007669"/>
    <property type="project" value="TreeGrafter"/>
</dbReference>
<dbReference type="GO" id="GO:0006000">
    <property type="term" value="P:fructose metabolic process"/>
    <property type="evidence" value="ECO:0007669"/>
    <property type="project" value="TreeGrafter"/>
</dbReference>
<dbReference type="GO" id="GO:0006094">
    <property type="term" value="P:gluconeogenesis"/>
    <property type="evidence" value="ECO:0007669"/>
    <property type="project" value="UniProtKB-UniRule"/>
</dbReference>
<dbReference type="GO" id="GO:0005986">
    <property type="term" value="P:sucrose biosynthetic process"/>
    <property type="evidence" value="ECO:0007669"/>
    <property type="project" value="TreeGrafter"/>
</dbReference>
<dbReference type="CDD" id="cd00354">
    <property type="entry name" value="FBPase"/>
    <property type="match status" value="1"/>
</dbReference>
<dbReference type="Gene3D" id="3.40.190.80">
    <property type="match status" value="1"/>
</dbReference>
<dbReference type="Gene3D" id="3.30.540.10">
    <property type="entry name" value="Fructose-1,6-Bisphosphatase, subunit A, domain 1"/>
    <property type="match status" value="1"/>
</dbReference>
<dbReference type="HAMAP" id="MF_01855">
    <property type="entry name" value="FBPase_class1"/>
    <property type="match status" value="1"/>
</dbReference>
<dbReference type="InterPro" id="IPR044015">
    <property type="entry name" value="FBPase_C_dom"/>
</dbReference>
<dbReference type="InterPro" id="IPR000146">
    <property type="entry name" value="FBPase_class-1"/>
</dbReference>
<dbReference type="InterPro" id="IPR033391">
    <property type="entry name" value="FBPase_N"/>
</dbReference>
<dbReference type="InterPro" id="IPR028343">
    <property type="entry name" value="FBPtase"/>
</dbReference>
<dbReference type="InterPro" id="IPR020548">
    <property type="entry name" value="Fructose_bisphosphatase_AS"/>
</dbReference>
<dbReference type="PANTHER" id="PTHR11556">
    <property type="entry name" value="FRUCTOSE-1,6-BISPHOSPHATASE-RELATED"/>
    <property type="match status" value="1"/>
</dbReference>
<dbReference type="PANTHER" id="PTHR11556:SF35">
    <property type="entry name" value="SEDOHEPTULOSE-1,7-BISPHOSPHATASE, CHLOROPLASTIC"/>
    <property type="match status" value="1"/>
</dbReference>
<dbReference type="Pfam" id="PF00316">
    <property type="entry name" value="FBPase"/>
    <property type="match status" value="1"/>
</dbReference>
<dbReference type="Pfam" id="PF18913">
    <property type="entry name" value="FBPase_C"/>
    <property type="match status" value="1"/>
</dbReference>
<dbReference type="PIRSF" id="PIRSF500210">
    <property type="entry name" value="FBPtase"/>
    <property type="match status" value="1"/>
</dbReference>
<dbReference type="PIRSF" id="PIRSF000904">
    <property type="entry name" value="FBPtase_SBPase"/>
    <property type="match status" value="1"/>
</dbReference>
<dbReference type="PRINTS" id="PR00115">
    <property type="entry name" value="F16BPHPHTASE"/>
</dbReference>
<dbReference type="SUPFAM" id="SSF56655">
    <property type="entry name" value="Carbohydrate phosphatase"/>
    <property type="match status" value="1"/>
</dbReference>
<dbReference type="PROSITE" id="PS00124">
    <property type="entry name" value="FBPASE"/>
    <property type="match status" value="1"/>
</dbReference>
<organism>
    <name type="scientific">Methanocorpusculum labreanum (strain ATCC 43576 / DSM 4855 / Z)</name>
    <dbReference type="NCBI Taxonomy" id="410358"/>
    <lineage>
        <taxon>Archaea</taxon>
        <taxon>Methanobacteriati</taxon>
        <taxon>Methanobacteriota</taxon>
        <taxon>Stenosarchaea group</taxon>
        <taxon>Methanomicrobia</taxon>
        <taxon>Methanomicrobiales</taxon>
        <taxon>Methanocorpusculaceae</taxon>
        <taxon>Methanocorpusculum</taxon>
    </lineage>
</organism>